<keyword id="KW-0548">Nucleotidyltransferase</keyword>
<keyword id="KW-0694">RNA-binding</keyword>
<keyword id="KW-0698">rRNA processing</keyword>
<keyword id="KW-0808">Transferase</keyword>
<keyword id="KW-0819">tRNA processing</keyword>
<keyword id="KW-0820">tRNA-binding</keyword>
<sequence length="238" mass="25998">MRPNNRELNQVRPVKITRHYTRYAEGSVLVEFGETKVLCNATVEETVPRFLKGQQQGWVTAEYGMLPRSTHSRMQREAAKGKQGGRTMEIQRLIARSLRAVVDLKALGERTVTVDCDVIQADGGTRTAAITGACVALHDAMSKLVADGVLKENPMKGLVAAISVGIVDGNAVCDLEYVEDSNAETDMNVVMVEDGRLVEVQGTAEGEPFSHMELLQLLDLAHQGINQLLDAQRKALAL</sequence>
<feature type="chain" id="PRO_1000129313" description="Ribonuclease PH">
    <location>
        <begin position="1"/>
        <end position="238"/>
    </location>
</feature>
<feature type="binding site" evidence="1">
    <location>
        <position position="86"/>
    </location>
    <ligand>
        <name>phosphate</name>
        <dbReference type="ChEBI" id="CHEBI:43474"/>
        <note>substrate</note>
    </ligand>
</feature>
<feature type="binding site" evidence="1">
    <location>
        <begin position="124"/>
        <end position="126"/>
    </location>
    <ligand>
        <name>phosphate</name>
        <dbReference type="ChEBI" id="CHEBI:43474"/>
        <note>substrate</note>
    </ligand>
</feature>
<name>RNPH_ACTPJ</name>
<comment type="function">
    <text evidence="1">Phosphorolytic 3'-5' exoribonuclease that plays an important role in tRNA 3'-end maturation. Removes nucleotide residues following the 3'-CCA terminus of tRNAs; can also add nucleotides to the ends of RNA molecules by using nucleoside diphosphates as substrates, but this may not be physiologically important. Probably plays a role in initiation of 16S rRNA degradation (leading to ribosome degradation) during starvation.</text>
</comment>
<comment type="catalytic activity">
    <reaction evidence="1">
        <text>tRNA(n+1) + phosphate = tRNA(n) + a ribonucleoside 5'-diphosphate</text>
        <dbReference type="Rhea" id="RHEA:10628"/>
        <dbReference type="Rhea" id="RHEA-COMP:17343"/>
        <dbReference type="Rhea" id="RHEA-COMP:17344"/>
        <dbReference type="ChEBI" id="CHEBI:43474"/>
        <dbReference type="ChEBI" id="CHEBI:57930"/>
        <dbReference type="ChEBI" id="CHEBI:173114"/>
        <dbReference type="EC" id="2.7.7.56"/>
    </reaction>
</comment>
<comment type="subunit">
    <text evidence="1">Homohexameric ring arranged as a trimer of dimers.</text>
</comment>
<comment type="similarity">
    <text evidence="1">Belongs to the RNase PH family.</text>
</comment>
<proteinExistence type="inferred from homology"/>
<organism>
    <name type="scientific">Actinobacillus pleuropneumoniae serotype 3 (strain JL03)</name>
    <dbReference type="NCBI Taxonomy" id="434271"/>
    <lineage>
        <taxon>Bacteria</taxon>
        <taxon>Pseudomonadati</taxon>
        <taxon>Pseudomonadota</taxon>
        <taxon>Gammaproteobacteria</taxon>
        <taxon>Pasteurellales</taxon>
        <taxon>Pasteurellaceae</taxon>
        <taxon>Actinobacillus</taxon>
    </lineage>
</organism>
<dbReference type="EC" id="2.7.7.56" evidence="1"/>
<dbReference type="EMBL" id="CP000687">
    <property type="protein sequence ID" value="ABY68661.1"/>
    <property type="molecule type" value="Genomic_DNA"/>
</dbReference>
<dbReference type="RefSeq" id="WP_005600009.1">
    <property type="nucleotide sequence ID" value="NC_010278.1"/>
</dbReference>
<dbReference type="SMR" id="B0BRL3"/>
<dbReference type="KEGG" id="apj:APJL_0055"/>
<dbReference type="HOGENOM" id="CLU_050858_0_0_6"/>
<dbReference type="Proteomes" id="UP000008547">
    <property type="component" value="Chromosome"/>
</dbReference>
<dbReference type="GO" id="GO:0000175">
    <property type="term" value="F:3'-5'-RNA exonuclease activity"/>
    <property type="evidence" value="ECO:0007669"/>
    <property type="project" value="UniProtKB-UniRule"/>
</dbReference>
<dbReference type="GO" id="GO:0000049">
    <property type="term" value="F:tRNA binding"/>
    <property type="evidence" value="ECO:0007669"/>
    <property type="project" value="UniProtKB-UniRule"/>
</dbReference>
<dbReference type="GO" id="GO:0009022">
    <property type="term" value="F:tRNA nucleotidyltransferase activity"/>
    <property type="evidence" value="ECO:0007669"/>
    <property type="project" value="UniProtKB-UniRule"/>
</dbReference>
<dbReference type="GO" id="GO:0016075">
    <property type="term" value="P:rRNA catabolic process"/>
    <property type="evidence" value="ECO:0007669"/>
    <property type="project" value="UniProtKB-UniRule"/>
</dbReference>
<dbReference type="GO" id="GO:0006364">
    <property type="term" value="P:rRNA processing"/>
    <property type="evidence" value="ECO:0007669"/>
    <property type="project" value="UniProtKB-KW"/>
</dbReference>
<dbReference type="GO" id="GO:0008033">
    <property type="term" value="P:tRNA processing"/>
    <property type="evidence" value="ECO:0007669"/>
    <property type="project" value="UniProtKB-UniRule"/>
</dbReference>
<dbReference type="CDD" id="cd11362">
    <property type="entry name" value="RNase_PH_bact"/>
    <property type="match status" value="1"/>
</dbReference>
<dbReference type="FunFam" id="3.30.230.70:FF:000003">
    <property type="entry name" value="Ribonuclease PH"/>
    <property type="match status" value="1"/>
</dbReference>
<dbReference type="Gene3D" id="3.30.230.70">
    <property type="entry name" value="GHMP Kinase, N-terminal domain"/>
    <property type="match status" value="1"/>
</dbReference>
<dbReference type="HAMAP" id="MF_00564">
    <property type="entry name" value="RNase_PH"/>
    <property type="match status" value="1"/>
</dbReference>
<dbReference type="InterPro" id="IPR001247">
    <property type="entry name" value="ExoRNase_PH_dom1"/>
</dbReference>
<dbReference type="InterPro" id="IPR015847">
    <property type="entry name" value="ExoRNase_PH_dom2"/>
</dbReference>
<dbReference type="InterPro" id="IPR036345">
    <property type="entry name" value="ExoRNase_PH_dom2_sf"/>
</dbReference>
<dbReference type="InterPro" id="IPR027408">
    <property type="entry name" value="PNPase/RNase_PH_dom_sf"/>
</dbReference>
<dbReference type="InterPro" id="IPR020568">
    <property type="entry name" value="Ribosomal_Su5_D2-typ_SF"/>
</dbReference>
<dbReference type="InterPro" id="IPR050080">
    <property type="entry name" value="RNase_PH"/>
</dbReference>
<dbReference type="InterPro" id="IPR002381">
    <property type="entry name" value="RNase_PH_bac-type"/>
</dbReference>
<dbReference type="InterPro" id="IPR018336">
    <property type="entry name" value="RNase_PH_CS"/>
</dbReference>
<dbReference type="NCBIfam" id="TIGR01966">
    <property type="entry name" value="RNasePH"/>
    <property type="match status" value="1"/>
</dbReference>
<dbReference type="PANTHER" id="PTHR11953">
    <property type="entry name" value="EXOSOME COMPLEX COMPONENT"/>
    <property type="match status" value="1"/>
</dbReference>
<dbReference type="PANTHER" id="PTHR11953:SF0">
    <property type="entry name" value="EXOSOME COMPLEX COMPONENT RRP41"/>
    <property type="match status" value="1"/>
</dbReference>
<dbReference type="Pfam" id="PF01138">
    <property type="entry name" value="RNase_PH"/>
    <property type="match status" value="1"/>
</dbReference>
<dbReference type="Pfam" id="PF03725">
    <property type="entry name" value="RNase_PH_C"/>
    <property type="match status" value="1"/>
</dbReference>
<dbReference type="SUPFAM" id="SSF55666">
    <property type="entry name" value="Ribonuclease PH domain 2-like"/>
    <property type="match status" value="1"/>
</dbReference>
<dbReference type="SUPFAM" id="SSF54211">
    <property type="entry name" value="Ribosomal protein S5 domain 2-like"/>
    <property type="match status" value="1"/>
</dbReference>
<dbReference type="PROSITE" id="PS01277">
    <property type="entry name" value="RIBONUCLEASE_PH"/>
    <property type="match status" value="1"/>
</dbReference>
<protein>
    <recommendedName>
        <fullName evidence="1">Ribonuclease PH</fullName>
        <shortName evidence="1">RNase PH</shortName>
        <ecNumber evidence="1">2.7.7.56</ecNumber>
    </recommendedName>
    <alternativeName>
        <fullName evidence="1">tRNA nucleotidyltransferase</fullName>
    </alternativeName>
</protein>
<gene>
    <name evidence="1" type="primary">rph</name>
    <name type="ordered locus">APJL_0055</name>
</gene>
<reference key="1">
    <citation type="journal article" date="2008" name="PLoS ONE">
        <title>Genome biology of Actinobacillus pleuropneumoniae JL03, an isolate of serotype 3 prevalent in China.</title>
        <authorList>
            <person name="Xu Z."/>
            <person name="Zhou Y."/>
            <person name="Li L."/>
            <person name="Zhou R."/>
            <person name="Xiao S."/>
            <person name="Wan Y."/>
            <person name="Zhang S."/>
            <person name="Wang K."/>
            <person name="Li W."/>
            <person name="Li L."/>
            <person name="Jin H."/>
            <person name="Kang M."/>
            <person name="Dalai B."/>
            <person name="Li T."/>
            <person name="Liu L."/>
            <person name="Cheng Y."/>
            <person name="Zhang L."/>
            <person name="Xu T."/>
            <person name="Zheng H."/>
            <person name="Pu S."/>
            <person name="Wang B."/>
            <person name="Gu W."/>
            <person name="Zhang X.L."/>
            <person name="Zhu G.-F."/>
            <person name="Wang S."/>
            <person name="Zhao G.-P."/>
            <person name="Chen H."/>
        </authorList>
    </citation>
    <scope>NUCLEOTIDE SEQUENCE [LARGE SCALE GENOMIC DNA]</scope>
    <source>
        <strain>JL03</strain>
    </source>
</reference>
<accession>B0BRL3</accession>
<evidence type="ECO:0000255" key="1">
    <source>
        <dbReference type="HAMAP-Rule" id="MF_00564"/>
    </source>
</evidence>